<keyword id="KW-1185">Reference proteome</keyword>
<keyword id="KW-0694">RNA-binding</keyword>
<keyword id="KW-0804">Transcription</keyword>
<keyword id="KW-0889">Transcription antitermination</keyword>
<keyword id="KW-0805">Transcription regulation</keyword>
<comment type="function">
    <text evidence="1">Involved in transcription antitermination. Required for transcription of ribosomal RNA (rRNA) genes. Binds specifically to the boxA antiterminator sequence of the ribosomal RNA (rrn) operons.</text>
</comment>
<comment type="similarity">
    <text evidence="1">Belongs to the NusB family.</text>
</comment>
<evidence type="ECO:0000255" key="1">
    <source>
        <dbReference type="HAMAP-Rule" id="MF_00073"/>
    </source>
</evidence>
<accession>B5Z6D7</accession>
<dbReference type="EMBL" id="CP001173">
    <property type="protein sequence ID" value="ACI26777.1"/>
    <property type="molecule type" value="Genomic_DNA"/>
</dbReference>
<dbReference type="RefSeq" id="WP_000235749.1">
    <property type="nucleotide sequence ID" value="NC_011333.1"/>
</dbReference>
<dbReference type="SMR" id="B5Z6D7"/>
<dbReference type="KEGG" id="hpg:HPG27_1"/>
<dbReference type="HOGENOM" id="CLU_087843_3_3_7"/>
<dbReference type="Proteomes" id="UP000001735">
    <property type="component" value="Chromosome"/>
</dbReference>
<dbReference type="GO" id="GO:0005829">
    <property type="term" value="C:cytosol"/>
    <property type="evidence" value="ECO:0007669"/>
    <property type="project" value="TreeGrafter"/>
</dbReference>
<dbReference type="GO" id="GO:0003723">
    <property type="term" value="F:RNA binding"/>
    <property type="evidence" value="ECO:0007669"/>
    <property type="project" value="UniProtKB-UniRule"/>
</dbReference>
<dbReference type="GO" id="GO:0006353">
    <property type="term" value="P:DNA-templated transcription termination"/>
    <property type="evidence" value="ECO:0007669"/>
    <property type="project" value="UniProtKB-UniRule"/>
</dbReference>
<dbReference type="GO" id="GO:0031564">
    <property type="term" value="P:transcription antitermination"/>
    <property type="evidence" value="ECO:0007669"/>
    <property type="project" value="UniProtKB-KW"/>
</dbReference>
<dbReference type="CDD" id="cd00619">
    <property type="entry name" value="Terminator_NusB"/>
    <property type="match status" value="1"/>
</dbReference>
<dbReference type="FunFam" id="1.10.940.10:FF:000004">
    <property type="entry name" value="Transcription antitermination protein NusB"/>
    <property type="match status" value="1"/>
</dbReference>
<dbReference type="Gene3D" id="1.10.940.10">
    <property type="entry name" value="NusB-like"/>
    <property type="match status" value="1"/>
</dbReference>
<dbReference type="HAMAP" id="MF_00073">
    <property type="entry name" value="NusB"/>
    <property type="match status" value="1"/>
</dbReference>
<dbReference type="InterPro" id="IPR035926">
    <property type="entry name" value="NusB-like_sf"/>
</dbReference>
<dbReference type="InterPro" id="IPR011605">
    <property type="entry name" value="NusB_fam"/>
</dbReference>
<dbReference type="InterPro" id="IPR006027">
    <property type="entry name" value="NusB_RsmB_TIM44"/>
</dbReference>
<dbReference type="NCBIfam" id="TIGR01951">
    <property type="entry name" value="nusB"/>
    <property type="match status" value="1"/>
</dbReference>
<dbReference type="PANTHER" id="PTHR11078:SF3">
    <property type="entry name" value="ANTITERMINATION NUSB DOMAIN-CONTAINING PROTEIN"/>
    <property type="match status" value="1"/>
</dbReference>
<dbReference type="PANTHER" id="PTHR11078">
    <property type="entry name" value="N UTILIZATION SUBSTANCE PROTEIN B-RELATED"/>
    <property type="match status" value="1"/>
</dbReference>
<dbReference type="Pfam" id="PF01029">
    <property type="entry name" value="NusB"/>
    <property type="match status" value="1"/>
</dbReference>
<dbReference type="SUPFAM" id="SSF48013">
    <property type="entry name" value="NusB-like"/>
    <property type="match status" value="1"/>
</dbReference>
<name>NUSB_HELPG</name>
<gene>
    <name evidence="1" type="primary">nusB</name>
    <name type="ordered locus">HPG27_1</name>
</gene>
<protein>
    <recommendedName>
        <fullName evidence="1">Transcription antitermination protein NusB</fullName>
    </recommendedName>
    <alternativeName>
        <fullName evidence="1">Antitermination factor NusB</fullName>
    </alternativeName>
</protein>
<sequence length="138" mass="15519">MATRTQARGAVVELLYAFESGNEEIKKIASSMLEEKKIKNNQLAFALSLFNGVLERINEIDALIEPHLKDWDFKRLGSMEKAILRLGAYEIGFTPTQNPIIINECIELGKLYAEPNTPKFLNAILDSLSKKLAQKPLN</sequence>
<organism>
    <name type="scientific">Helicobacter pylori (strain G27)</name>
    <dbReference type="NCBI Taxonomy" id="563041"/>
    <lineage>
        <taxon>Bacteria</taxon>
        <taxon>Pseudomonadati</taxon>
        <taxon>Campylobacterota</taxon>
        <taxon>Epsilonproteobacteria</taxon>
        <taxon>Campylobacterales</taxon>
        <taxon>Helicobacteraceae</taxon>
        <taxon>Helicobacter</taxon>
    </lineage>
</organism>
<feature type="chain" id="PRO_1000092558" description="Transcription antitermination protein NusB">
    <location>
        <begin position="1"/>
        <end position="138"/>
    </location>
</feature>
<proteinExistence type="inferred from homology"/>
<reference key="1">
    <citation type="journal article" date="2009" name="J. Bacteriol.">
        <title>The complete genome sequence of Helicobacter pylori strain G27.</title>
        <authorList>
            <person name="Baltrus D.A."/>
            <person name="Amieva M.R."/>
            <person name="Covacci A."/>
            <person name="Lowe T.M."/>
            <person name="Merrell D.S."/>
            <person name="Ottemann K.M."/>
            <person name="Stein M."/>
            <person name="Salama N.R."/>
            <person name="Guillemin K."/>
        </authorList>
    </citation>
    <scope>NUCLEOTIDE SEQUENCE [LARGE SCALE GENOMIC DNA]</scope>
    <source>
        <strain>G27</strain>
    </source>
</reference>